<organism>
    <name type="scientific">Escherichia coli O17:K52:H18 (strain UMN026 / ExPEC)</name>
    <dbReference type="NCBI Taxonomy" id="585056"/>
    <lineage>
        <taxon>Bacteria</taxon>
        <taxon>Pseudomonadati</taxon>
        <taxon>Pseudomonadota</taxon>
        <taxon>Gammaproteobacteria</taxon>
        <taxon>Enterobacterales</taxon>
        <taxon>Enterobacteriaceae</taxon>
        <taxon>Escherichia</taxon>
    </lineage>
</organism>
<sequence length="513" mass="55222">MQLNSTEISELIKQRIAQFNVVSEAHNEGTIVSVSDGVIRIHGLADCMQGEMISLPGNRYAIALNLERDSVGAVVMGPYADLAEGMKVKCTGRILEVPVGRGLLGRVVNTLGAPIDGKGPLDHDGFSAVEAIAPGVIERQSVDQPVQTGYKAVDSMIPIGRGQRELIIGDRQTGKTALAIDAIINQRDSGIKCIYVAIGQKASTISNVVRKLEEHGALANTIVVVATASESAALQYLAPYAGCAMGEYFRDRGEDALIIYDDLSKQAVAYRQISLLLRRPPGREAFPGDVFYLHSRLLERAARVNAEYVEAFTKGEVKGKTGSLTALPIIETQAGDVSAFVPTNVISITDGQIFLETNLFNAGIRPAVNPGISVSRVGGAAQTKIMKKLSGGIRTALAQYRELAAFSQFASDLDDATRKQLDHGQKVTELLKQKQYAPMSVAQQSLVLFAAERGYLADVELSKIGSFEAALLAYVDRDHAPLMQEINQTGGYNDEIEGKLKGILDSFKATQSW</sequence>
<feature type="chain" id="PRO_1000143377" description="ATP synthase subunit alpha">
    <location>
        <begin position="1"/>
        <end position="513"/>
    </location>
</feature>
<feature type="binding site" evidence="1">
    <location>
        <begin position="169"/>
        <end position="176"/>
    </location>
    <ligand>
        <name>ATP</name>
        <dbReference type="ChEBI" id="CHEBI:30616"/>
    </ligand>
</feature>
<feature type="site" description="Required for activity" evidence="1">
    <location>
        <position position="373"/>
    </location>
</feature>
<name>ATPA_ECOLU</name>
<dbReference type="EC" id="7.1.2.2" evidence="1"/>
<dbReference type="EMBL" id="CU928163">
    <property type="protein sequence ID" value="CAR15404.1"/>
    <property type="molecule type" value="Genomic_DNA"/>
</dbReference>
<dbReference type="RefSeq" id="WP_001176745.1">
    <property type="nucleotide sequence ID" value="NC_011751.1"/>
</dbReference>
<dbReference type="RefSeq" id="YP_002414899.1">
    <property type="nucleotide sequence ID" value="NC_011751.1"/>
</dbReference>
<dbReference type="SMR" id="B7NF50"/>
<dbReference type="STRING" id="585056.ECUMN_4264"/>
<dbReference type="GeneID" id="93778233"/>
<dbReference type="KEGG" id="eum:ECUMN_4264"/>
<dbReference type="PATRIC" id="fig|585056.7.peg.4435"/>
<dbReference type="HOGENOM" id="CLU_010091_2_1_6"/>
<dbReference type="Proteomes" id="UP000007097">
    <property type="component" value="Chromosome"/>
</dbReference>
<dbReference type="GO" id="GO:0005886">
    <property type="term" value="C:plasma membrane"/>
    <property type="evidence" value="ECO:0007669"/>
    <property type="project" value="UniProtKB-SubCell"/>
</dbReference>
<dbReference type="GO" id="GO:0045259">
    <property type="term" value="C:proton-transporting ATP synthase complex"/>
    <property type="evidence" value="ECO:0007669"/>
    <property type="project" value="UniProtKB-KW"/>
</dbReference>
<dbReference type="GO" id="GO:0043531">
    <property type="term" value="F:ADP binding"/>
    <property type="evidence" value="ECO:0007669"/>
    <property type="project" value="TreeGrafter"/>
</dbReference>
<dbReference type="GO" id="GO:0005524">
    <property type="term" value="F:ATP binding"/>
    <property type="evidence" value="ECO:0007669"/>
    <property type="project" value="UniProtKB-UniRule"/>
</dbReference>
<dbReference type="GO" id="GO:0046933">
    <property type="term" value="F:proton-transporting ATP synthase activity, rotational mechanism"/>
    <property type="evidence" value="ECO:0007669"/>
    <property type="project" value="UniProtKB-UniRule"/>
</dbReference>
<dbReference type="CDD" id="cd18113">
    <property type="entry name" value="ATP-synt_F1_alpha_C"/>
    <property type="match status" value="1"/>
</dbReference>
<dbReference type="CDD" id="cd18116">
    <property type="entry name" value="ATP-synt_F1_alpha_N"/>
    <property type="match status" value="1"/>
</dbReference>
<dbReference type="CDD" id="cd01132">
    <property type="entry name" value="F1-ATPase_alpha_CD"/>
    <property type="match status" value="1"/>
</dbReference>
<dbReference type="FunFam" id="1.20.150.20:FF:000001">
    <property type="entry name" value="ATP synthase subunit alpha"/>
    <property type="match status" value="1"/>
</dbReference>
<dbReference type="FunFam" id="2.40.30.20:FF:000001">
    <property type="entry name" value="ATP synthase subunit alpha"/>
    <property type="match status" value="1"/>
</dbReference>
<dbReference type="FunFam" id="3.40.50.300:FF:000002">
    <property type="entry name" value="ATP synthase subunit alpha"/>
    <property type="match status" value="1"/>
</dbReference>
<dbReference type="Gene3D" id="2.40.30.20">
    <property type="match status" value="1"/>
</dbReference>
<dbReference type="Gene3D" id="1.20.150.20">
    <property type="entry name" value="ATP synthase alpha/beta chain, C-terminal domain"/>
    <property type="match status" value="1"/>
</dbReference>
<dbReference type="Gene3D" id="3.40.50.300">
    <property type="entry name" value="P-loop containing nucleotide triphosphate hydrolases"/>
    <property type="match status" value="1"/>
</dbReference>
<dbReference type="HAMAP" id="MF_01346">
    <property type="entry name" value="ATP_synth_alpha_bact"/>
    <property type="match status" value="1"/>
</dbReference>
<dbReference type="InterPro" id="IPR023366">
    <property type="entry name" value="ATP_synth_asu-like_sf"/>
</dbReference>
<dbReference type="InterPro" id="IPR000793">
    <property type="entry name" value="ATP_synth_asu_C"/>
</dbReference>
<dbReference type="InterPro" id="IPR038376">
    <property type="entry name" value="ATP_synth_asu_C_sf"/>
</dbReference>
<dbReference type="InterPro" id="IPR033732">
    <property type="entry name" value="ATP_synth_F1_a_nt-bd_dom"/>
</dbReference>
<dbReference type="InterPro" id="IPR005294">
    <property type="entry name" value="ATP_synth_F1_asu"/>
</dbReference>
<dbReference type="InterPro" id="IPR020003">
    <property type="entry name" value="ATPase_a/bsu_AS"/>
</dbReference>
<dbReference type="InterPro" id="IPR004100">
    <property type="entry name" value="ATPase_F1/V1/A1_a/bsu_N"/>
</dbReference>
<dbReference type="InterPro" id="IPR036121">
    <property type="entry name" value="ATPase_F1/V1/A1_a/bsu_N_sf"/>
</dbReference>
<dbReference type="InterPro" id="IPR000194">
    <property type="entry name" value="ATPase_F1/V1/A1_a/bsu_nucl-bd"/>
</dbReference>
<dbReference type="InterPro" id="IPR027417">
    <property type="entry name" value="P-loop_NTPase"/>
</dbReference>
<dbReference type="NCBIfam" id="TIGR00962">
    <property type="entry name" value="atpA"/>
    <property type="match status" value="1"/>
</dbReference>
<dbReference type="NCBIfam" id="NF009884">
    <property type="entry name" value="PRK13343.1"/>
    <property type="match status" value="1"/>
</dbReference>
<dbReference type="PANTHER" id="PTHR48082">
    <property type="entry name" value="ATP SYNTHASE SUBUNIT ALPHA, MITOCHONDRIAL"/>
    <property type="match status" value="1"/>
</dbReference>
<dbReference type="PANTHER" id="PTHR48082:SF2">
    <property type="entry name" value="ATP SYNTHASE SUBUNIT ALPHA, MITOCHONDRIAL"/>
    <property type="match status" value="1"/>
</dbReference>
<dbReference type="Pfam" id="PF00006">
    <property type="entry name" value="ATP-synt_ab"/>
    <property type="match status" value="1"/>
</dbReference>
<dbReference type="Pfam" id="PF00306">
    <property type="entry name" value="ATP-synt_ab_C"/>
    <property type="match status" value="1"/>
</dbReference>
<dbReference type="Pfam" id="PF02874">
    <property type="entry name" value="ATP-synt_ab_N"/>
    <property type="match status" value="1"/>
</dbReference>
<dbReference type="SUPFAM" id="SSF47917">
    <property type="entry name" value="C-terminal domain of alpha and beta subunits of F1 ATP synthase"/>
    <property type="match status" value="1"/>
</dbReference>
<dbReference type="SUPFAM" id="SSF50615">
    <property type="entry name" value="N-terminal domain of alpha and beta subunits of F1 ATP synthase"/>
    <property type="match status" value="1"/>
</dbReference>
<dbReference type="SUPFAM" id="SSF52540">
    <property type="entry name" value="P-loop containing nucleoside triphosphate hydrolases"/>
    <property type="match status" value="1"/>
</dbReference>
<dbReference type="PROSITE" id="PS00152">
    <property type="entry name" value="ATPASE_ALPHA_BETA"/>
    <property type="match status" value="1"/>
</dbReference>
<protein>
    <recommendedName>
        <fullName evidence="1">ATP synthase subunit alpha</fullName>
        <ecNumber evidence="1">7.1.2.2</ecNumber>
    </recommendedName>
    <alternativeName>
        <fullName evidence="1">ATP synthase F1 sector subunit alpha</fullName>
    </alternativeName>
    <alternativeName>
        <fullName evidence="1">F-ATPase subunit alpha</fullName>
    </alternativeName>
</protein>
<gene>
    <name evidence="1" type="primary">atpA</name>
    <name type="ordered locus">ECUMN_4264</name>
</gene>
<accession>B7NF50</accession>
<comment type="function">
    <text evidence="1">Produces ATP from ADP in the presence of a proton gradient across the membrane. The alpha chain is a regulatory subunit.</text>
</comment>
<comment type="catalytic activity">
    <reaction evidence="1">
        <text>ATP + H2O + 4 H(+)(in) = ADP + phosphate + 5 H(+)(out)</text>
        <dbReference type="Rhea" id="RHEA:57720"/>
        <dbReference type="ChEBI" id="CHEBI:15377"/>
        <dbReference type="ChEBI" id="CHEBI:15378"/>
        <dbReference type="ChEBI" id="CHEBI:30616"/>
        <dbReference type="ChEBI" id="CHEBI:43474"/>
        <dbReference type="ChEBI" id="CHEBI:456216"/>
        <dbReference type="EC" id="7.1.2.2"/>
    </reaction>
</comment>
<comment type="subunit">
    <text evidence="1">F-type ATPases have 2 components, CF(1) - the catalytic core - and CF(0) - the membrane proton channel. CF(1) has five subunits: alpha(3), beta(3), gamma(1), delta(1), epsilon(1). CF(0) has three main subunits: a(1), b(2) and c(9-12). The alpha and beta chains form an alternating ring which encloses part of the gamma chain. CF(1) is attached to CF(0) by a central stalk formed by the gamma and epsilon chains, while a peripheral stalk is formed by the delta and b chains.</text>
</comment>
<comment type="subcellular location">
    <subcellularLocation>
        <location evidence="1">Cell inner membrane</location>
        <topology evidence="1">Peripheral membrane protein</topology>
    </subcellularLocation>
</comment>
<comment type="similarity">
    <text evidence="1">Belongs to the ATPase alpha/beta chains family.</text>
</comment>
<evidence type="ECO:0000255" key="1">
    <source>
        <dbReference type="HAMAP-Rule" id="MF_01346"/>
    </source>
</evidence>
<proteinExistence type="inferred from homology"/>
<keyword id="KW-0066">ATP synthesis</keyword>
<keyword id="KW-0067">ATP-binding</keyword>
<keyword id="KW-0997">Cell inner membrane</keyword>
<keyword id="KW-1003">Cell membrane</keyword>
<keyword id="KW-0139">CF(1)</keyword>
<keyword id="KW-0375">Hydrogen ion transport</keyword>
<keyword id="KW-0406">Ion transport</keyword>
<keyword id="KW-0472">Membrane</keyword>
<keyword id="KW-0547">Nucleotide-binding</keyword>
<keyword id="KW-1278">Translocase</keyword>
<keyword id="KW-0813">Transport</keyword>
<reference key="1">
    <citation type="journal article" date="2009" name="PLoS Genet.">
        <title>Organised genome dynamics in the Escherichia coli species results in highly diverse adaptive paths.</title>
        <authorList>
            <person name="Touchon M."/>
            <person name="Hoede C."/>
            <person name="Tenaillon O."/>
            <person name="Barbe V."/>
            <person name="Baeriswyl S."/>
            <person name="Bidet P."/>
            <person name="Bingen E."/>
            <person name="Bonacorsi S."/>
            <person name="Bouchier C."/>
            <person name="Bouvet O."/>
            <person name="Calteau A."/>
            <person name="Chiapello H."/>
            <person name="Clermont O."/>
            <person name="Cruveiller S."/>
            <person name="Danchin A."/>
            <person name="Diard M."/>
            <person name="Dossat C."/>
            <person name="Karoui M.E."/>
            <person name="Frapy E."/>
            <person name="Garry L."/>
            <person name="Ghigo J.M."/>
            <person name="Gilles A.M."/>
            <person name="Johnson J."/>
            <person name="Le Bouguenec C."/>
            <person name="Lescat M."/>
            <person name="Mangenot S."/>
            <person name="Martinez-Jehanne V."/>
            <person name="Matic I."/>
            <person name="Nassif X."/>
            <person name="Oztas S."/>
            <person name="Petit M.A."/>
            <person name="Pichon C."/>
            <person name="Rouy Z."/>
            <person name="Ruf C.S."/>
            <person name="Schneider D."/>
            <person name="Tourret J."/>
            <person name="Vacherie B."/>
            <person name="Vallenet D."/>
            <person name="Medigue C."/>
            <person name="Rocha E.P.C."/>
            <person name="Denamur E."/>
        </authorList>
    </citation>
    <scope>NUCLEOTIDE SEQUENCE [LARGE SCALE GENOMIC DNA]</scope>
    <source>
        <strain>UMN026 / ExPEC</strain>
    </source>
</reference>